<dbReference type="EMBL" id="CP000951">
    <property type="protein sequence ID" value="ACA99908.1"/>
    <property type="molecule type" value="Genomic_DNA"/>
</dbReference>
<dbReference type="SMR" id="B1XQL3"/>
<dbReference type="STRING" id="32049.SYNPCC7002_A1921"/>
<dbReference type="KEGG" id="syp:SYNPCC7002_A1921"/>
<dbReference type="eggNOG" id="COG0755">
    <property type="taxonomic scope" value="Bacteria"/>
</dbReference>
<dbReference type="HOGENOM" id="CLU_049710_2_2_3"/>
<dbReference type="Proteomes" id="UP000001688">
    <property type="component" value="Chromosome"/>
</dbReference>
<dbReference type="GO" id="GO:0031676">
    <property type="term" value="C:plasma membrane-derived thylakoid membrane"/>
    <property type="evidence" value="ECO:0007669"/>
    <property type="project" value="UniProtKB-SubCell"/>
</dbReference>
<dbReference type="GO" id="GO:0020037">
    <property type="term" value="F:heme binding"/>
    <property type="evidence" value="ECO:0007669"/>
    <property type="project" value="InterPro"/>
</dbReference>
<dbReference type="GO" id="GO:0017004">
    <property type="term" value="P:cytochrome complex assembly"/>
    <property type="evidence" value="ECO:0007669"/>
    <property type="project" value="UniProtKB-UniRule"/>
</dbReference>
<dbReference type="HAMAP" id="MF_01391">
    <property type="entry name" value="CytC_CcsA"/>
    <property type="match status" value="1"/>
</dbReference>
<dbReference type="InterPro" id="IPR002541">
    <property type="entry name" value="Cyt_c_assembly"/>
</dbReference>
<dbReference type="InterPro" id="IPR017562">
    <property type="entry name" value="Cyt_c_biogenesis_CcsA"/>
</dbReference>
<dbReference type="InterPro" id="IPR045062">
    <property type="entry name" value="Cyt_c_biogenesis_CcsA/CcmC"/>
</dbReference>
<dbReference type="NCBIfam" id="TIGR03144">
    <property type="entry name" value="cytochr_II_ccsB"/>
    <property type="match status" value="1"/>
</dbReference>
<dbReference type="PANTHER" id="PTHR30071:SF1">
    <property type="entry name" value="CYTOCHROME B_B6 PROTEIN-RELATED"/>
    <property type="match status" value="1"/>
</dbReference>
<dbReference type="PANTHER" id="PTHR30071">
    <property type="entry name" value="HEME EXPORTER PROTEIN C"/>
    <property type="match status" value="1"/>
</dbReference>
<dbReference type="Pfam" id="PF01578">
    <property type="entry name" value="Cytochrom_C_asm"/>
    <property type="match status" value="1"/>
</dbReference>
<organism>
    <name type="scientific">Picosynechococcus sp. (strain ATCC 27264 / PCC 7002 / PR-6)</name>
    <name type="common">Agmenellum quadruplicatum</name>
    <dbReference type="NCBI Taxonomy" id="32049"/>
    <lineage>
        <taxon>Bacteria</taxon>
        <taxon>Bacillati</taxon>
        <taxon>Cyanobacteriota</taxon>
        <taxon>Cyanophyceae</taxon>
        <taxon>Oscillatoriophycideae</taxon>
        <taxon>Chroococcales</taxon>
        <taxon>Geminocystaceae</taxon>
        <taxon>Picosynechococcus</taxon>
    </lineage>
</organism>
<gene>
    <name evidence="2" type="primary">ccsA</name>
    <name type="ordered locus">SYNPCC7002_A1921</name>
</gene>
<protein>
    <recommendedName>
        <fullName evidence="2">Cytochrome c biogenesis protein CcsA</fullName>
    </recommendedName>
</protein>
<keyword id="KW-0201">Cytochrome c-type biogenesis</keyword>
<keyword id="KW-0472">Membrane</keyword>
<keyword id="KW-1185">Reference proteome</keyword>
<keyword id="KW-0793">Thylakoid</keyword>
<keyword id="KW-0812">Transmembrane</keyword>
<keyword id="KW-1133">Transmembrane helix</keyword>
<comment type="function">
    <text evidence="2">Required during biogenesis of c-type cytochromes (cytochrome c6 and cytochrome f) at the step of heme attachment.</text>
</comment>
<comment type="subunit">
    <text evidence="1">May interact with ccs1.</text>
</comment>
<comment type="subcellular location">
    <subcellularLocation>
        <location evidence="2">Cellular thylakoid membrane</location>
        <topology evidence="2">Multi-pass membrane protein</topology>
    </subcellularLocation>
</comment>
<comment type="similarity">
    <text evidence="2">Belongs to the CcmF/CycK/Ccl1/NrfE/CcsA family.</text>
</comment>
<reference key="1">
    <citation type="submission" date="2008-02" db="EMBL/GenBank/DDBJ databases">
        <title>Complete sequence of Synechococcus sp. PCC 7002.</title>
        <authorList>
            <person name="Li T."/>
            <person name="Zhao J."/>
            <person name="Zhao C."/>
            <person name="Liu Z."/>
            <person name="Zhao F."/>
            <person name="Marquardt J."/>
            <person name="Nomura C.T."/>
            <person name="Persson S."/>
            <person name="Detter J.C."/>
            <person name="Richardson P.M."/>
            <person name="Lanz C."/>
            <person name="Schuster S.C."/>
            <person name="Wang J."/>
            <person name="Li S."/>
            <person name="Huang X."/>
            <person name="Cai T."/>
            <person name="Yu Z."/>
            <person name="Luo J."/>
            <person name="Zhao J."/>
            <person name="Bryant D.A."/>
        </authorList>
    </citation>
    <scope>NUCLEOTIDE SEQUENCE [LARGE SCALE GENOMIC DNA]</scope>
    <source>
        <strain>ATCC 27264 / PCC 7002 / PR-6</strain>
    </source>
</reference>
<sequence>MDLVALQSLLDNTSFLVLFLTMLLYWGGAAFPNIPGLTGLGTLGVAIANLCMATLLGARWLEAGYFPLSNLYESLFFLAWGVTTMHLVAEWMSRSRWVGVITAPVAMGITAFAALSLPAEMQNSAPLVPALKSNWLMMHVSVMMISYAALLVGSLLAIAFLIVTKGQKIELRGSSVGNGSYRLRQPQNTTDETPVTVVAFQKTEPQSNGNTAVLASPDLQQLTTTPALSPQMLSLADTLDNISYRIIGLGFPLLTIGIIAGAVWANEAWGSYWSWDPKETWALITWLVFAAYLHARITRGWQGRQPAFLAAAGFFVVWVCYLGVNILGKGLHSYGWFF</sequence>
<feature type="chain" id="PRO_0000353716" description="Cytochrome c biogenesis protein CcsA">
    <location>
        <begin position="1"/>
        <end position="338"/>
    </location>
</feature>
<feature type="transmembrane region" description="Helical" evidence="2">
    <location>
        <begin position="15"/>
        <end position="35"/>
    </location>
</feature>
<feature type="transmembrane region" description="Helical" evidence="2">
    <location>
        <begin position="36"/>
        <end position="56"/>
    </location>
</feature>
<feature type="transmembrane region" description="Helical" evidence="2">
    <location>
        <begin position="71"/>
        <end position="91"/>
    </location>
</feature>
<feature type="transmembrane region" description="Helical" evidence="2">
    <location>
        <begin position="97"/>
        <end position="117"/>
    </location>
</feature>
<feature type="transmembrane region" description="Helical" evidence="2">
    <location>
        <begin position="142"/>
        <end position="162"/>
    </location>
</feature>
<feature type="transmembrane region" description="Helical" evidence="2">
    <location>
        <begin position="246"/>
        <end position="266"/>
    </location>
</feature>
<feature type="transmembrane region" description="Helical" evidence="2">
    <location>
        <begin position="273"/>
        <end position="293"/>
    </location>
</feature>
<feature type="transmembrane region" description="Helical" evidence="2">
    <location>
        <begin position="307"/>
        <end position="327"/>
    </location>
</feature>
<evidence type="ECO:0000250" key="1"/>
<evidence type="ECO:0000255" key="2">
    <source>
        <dbReference type="HAMAP-Rule" id="MF_01391"/>
    </source>
</evidence>
<accession>B1XQL3</accession>
<proteinExistence type="inferred from homology"/>
<name>CCSA_PICP2</name>